<evidence type="ECO:0000255" key="1">
    <source>
        <dbReference type="HAMAP-Rule" id="MF_00374"/>
    </source>
</evidence>
<evidence type="ECO:0000305" key="2"/>
<protein>
    <recommendedName>
        <fullName evidence="1">Large ribosomal subunit protein uL29</fullName>
    </recommendedName>
    <alternativeName>
        <fullName evidence="2">50S ribosomal protein L29</fullName>
    </alternativeName>
</protein>
<feature type="chain" id="PRO_1000007648" description="Large ribosomal subunit protein uL29">
    <location>
        <begin position="1"/>
        <end position="82"/>
    </location>
</feature>
<organism>
    <name type="scientific">Trichodesmium erythraeum (strain IMS101)</name>
    <dbReference type="NCBI Taxonomy" id="203124"/>
    <lineage>
        <taxon>Bacteria</taxon>
        <taxon>Bacillati</taxon>
        <taxon>Cyanobacteriota</taxon>
        <taxon>Cyanophyceae</taxon>
        <taxon>Oscillatoriophycideae</taxon>
        <taxon>Oscillatoriales</taxon>
        <taxon>Microcoleaceae</taxon>
        <taxon>Trichodesmium</taxon>
    </lineage>
</organism>
<proteinExistence type="inferred from homology"/>
<dbReference type="EMBL" id="CP000393">
    <property type="protein sequence ID" value="ABG52159.1"/>
    <property type="molecule type" value="Genomic_DNA"/>
</dbReference>
<dbReference type="RefSeq" id="WP_011612514.1">
    <property type="nucleotide sequence ID" value="NC_008312.1"/>
</dbReference>
<dbReference type="SMR" id="Q110B5"/>
<dbReference type="STRING" id="203124.Tery_3004"/>
<dbReference type="KEGG" id="ter:Tery_3004"/>
<dbReference type="eggNOG" id="COG0255">
    <property type="taxonomic scope" value="Bacteria"/>
</dbReference>
<dbReference type="HOGENOM" id="CLU_158491_0_0_3"/>
<dbReference type="OrthoDB" id="9815192at2"/>
<dbReference type="GO" id="GO:0022625">
    <property type="term" value="C:cytosolic large ribosomal subunit"/>
    <property type="evidence" value="ECO:0007669"/>
    <property type="project" value="TreeGrafter"/>
</dbReference>
<dbReference type="GO" id="GO:0003735">
    <property type="term" value="F:structural constituent of ribosome"/>
    <property type="evidence" value="ECO:0007669"/>
    <property type="project" value="InterPro"/>
</dbReference>
<dbReference type="GO" id="GO:0006412">
    <property type="term" value="P:translation"/>
    <property type="evidence" value="ECO:0007669"/>
    <property type="project" value="UniProtKB-UniRule"/>
</dbReference>
<dbReference type="CDD" id="cd00427">
    <property type="entry name" value="Ribosomal_L29_HIP"/>
    <property type="match status" value="1"/>
</dbReference>
<dbReference type="Gene3D" id="1.10.287.310">
    <property type="match status" value="1"/>
</dbReference>
<dbReference type="HAMAP" id="MF_00374">
    <property type="entry name" value="Ribosomal_uL29"/>
    <property type="match status" value="1"/>
</dbReference>
<dbReference type="InterPro" id="IPR050063">
    <property type="entry name" value="Ribosomal_protein_uL29"/>
</dbReference>
<dbReference type="InterPro" id="IPR001854">
    <property type="entry name" value="Ribosomal_uL29"/>
</dbReference>
<dbReference type="InterPro" id="IPR036049">
    <property type="entry name" value="Ribosomal_uL29_sf"/>
</dbReference>
<dbReference type="NCBIfam" id="TIGR00012">
    <property type="entry name" value="L29"/>
    <property type="match status" value="1"/>
</dbReference>
<dbReference type="PANTHER" id="PTHR10916">
    <property type="entry name" value="60S RIBOSOMAL PROTEIN L35/50S RIBOSOMAL PROTEIN L29"/>
    <property type="match status" value="1"/>
</dbReference>
<dbReference type="PANTHER" id="PTHR10916:SF0">
    <property type="entry name" value="LARGE RIBOSOMAL SUBUNIT PROTEIN UL29C"/>
    <property type="match status" value="1"/>
</dbReference>
<dbReference type="Pfam" id="PF00831">
    <property type="entry name" value="Ribosomal_L29"/>
    <property type="match status" value="1"/>
</dbReference>
<dbReference type="SUPFAM" id="SSF46561">
    <property type="entry name" value="Ribosomal protein L29 (L29p)"/>
    <property type="match status" value="1"/>
</dbReference>
<accession>Q110B5</accession>
<sequence length="82" mass="9496">MPFPKIAEVRELSDEEIANEIAKVKRELFDLRILKATGRIEKTHLFKHNRHRLAQLLTIEKERELAKNAEASTTVSTVENTQ</sequence>
<reference key="1">
    <citation type="journal article" date="2015" name="Proc. Natl. Acad. Sci. U.S.A.">
        <title>Trichodesmium genome maintains abundant, widespread noncoding DNA in situ, despite oligotrophic lifestyle.</title>
        <authorList>
            <person name="Walworth N."/>
            <person name="Pfreundt U."/>
            <person name="Nelson W.C."/>
            <person name="Mincer T."/>
            <person name="Heidelberg J.F."/>
            <person name="Fu F."/>
            <person name="Waterbury J.B."/>
            <person name="Glavina del Rio T."/>
            <person name="Goodwin L."/>
            <person name="Kyrpides N.C."/>
            <person name="Land M.L."/>
            <person name="Woyke T."/>
            <person name="Hutchins D.A."/>
            <person name="Hess W.R."/>
            <person name="Webb E.A."/>
        </authorList>
    </citation>
    <scope>NUCLEOTIDE SEQUENCE [LARGE SCALE GENOMIC DNA]</scope>
    <source>
        <strain>IMS101</strain>
    </source>
</reference>
<keyword id="KW-0687">Ribonucleoprotein</keyword>
<keyword id="KW-0689">Ribosomal protein</keyword>
<comment type="similarity">
    <text evidence="1">Belongs to the universal ribosomal protein uL29 family.</text>
</comment>
<name>RL29_TRIEI</name>
<gene>
    <name evidence="1" type="primary">rpmC</name>
    <name evidence="1" type="synonym">rpl29</name>
    <name type="ordered locus">Tery_3004</name>
</gene>